<dbReference type="EC" id="3.1.1.29" evidence="1"/>
<dbReference type="EMBL" id="CU234118">
    <property type="protein sequence ID" value="CAL79661.1"/>
    <property type="molecule type" value="Genomic_DNA"/>
</dbReference>
<dbReference type="RefSeq" id="WP_012029556.1">
    <property type="nucleotide sequence ID" value="NC_009445.1"/>
</dbReference>
<dbReference type="SMR" id="A4Z0I5"/>
<dbReference type="STRING" id="114615.BRADO6007"/>
<dbReference type="KEGG" id="bra:BRADO6007"/>
<dbReference type="eggNOG" id="COG0193">
    <property type="taxonomic scope" value="Bacteria"/>
</dbReference>
<dbReference type="HOGENOM" id="CLU_062456_1_0_5"/>
<dbReference type="OrthoDB" id="9800507at2"/>
<dbReference type="Proteomes" id="UP000001994">
    <property type="component" value="Chromosome"/>
</dbReference>
<dbReference type="GO" id="GO:0005737">
    <property type="term" value="C:cytoplasm"/>
    <property type="evidence" value="ECO:0007669"/>
    <property type="project" value="UniProtKB-SubCell"/>
</dbReference>
<dbReference type="GO" id="GO:0004045">
    <property type="term" value="F:peptidyl-tRNA hydrolase activity"/>
    <property type="evidence" value="ECO:0007669"/>
    <property type="project" value="UniProtKB-UniRule"/>
</dbReference>
<dbReference type="GO" id="GO:0000049">
    <property type="term" value="F:tRNA binding"/>
    <property type="evidence" value="ECO:0007669"/>
    <property type="project" value="UniProtKB-UniRule"/>
</dbReference>
<dbReference type="GO" id="GO:0006515">
    <property type="term" value="P:protein quality control for misfolded or incompletely synthesized proteins"/>
    <property type="evidence" value="ECO:0007669"/>
    <property type="project" value="UniProtKB-UniRule"/>
</dbReference>
<dbReference type="GO" id="GO:0072344">
    <property type="term" value="P:rescue of stalled ribosome"/>
    <property type="evidence" value="ECO:0007669"/>
    <property type="project" value="UniProtKB-UniRule"/>
</dbReference>
<dbReference type="CDD" id="cd00462">
    <property type="entry name" value="PTH"/>
    <property type="match status" value="1"/>
</dbReference>
<dbReference type="FunFam" id="3.40.50.1470:FF:000001">
    <property type="entry name" value="Peptidyl-tRNA hydrolase"/>
    <property type="match status" value="1"/>
</dbReference>
<dbReference type="Gene3D" id="3.40.50.1470">
    <property type="entry name" value="Peptidyl-tRNA hydrolase"/>
    <property type="match status" value="1"/>
</dbReference>
<dbReference type="HAMAP" id="MF_00083">
    <property type="entry name" value="Pept_tRNA_hydro_bact"/>
    <property type="match status" value="1"/>
</dbReference>
<dbReference type="InterPro" id="IPR001328">
    <property type="entry name" value="Pept_tRNA_hydro"/>
</dbReference>
<dbReference type="InterPro" id="IPR018171">
    <property type="entry name" value="Pept_tRNA_hydro_CS"/>
</dbReference>
<dbReference type="InterPro" id="IPR036416">
    <property type="entry name" value="Pept_tRNA_hydro_sf"/>
</dbReference>
<dbReference type="NCBIfam" id="TIGR00447">
    <property type="entry name" value="pth"/>
    <property type="match status" value="1"/>
</dbReference>
<dbReference type="PANTHER" id="PTHR17224">
    <property type="entry name" value="PEPTIDYL-TRNA HYDROLASE"/>
    <property type="match status" value="1"/>
</dbReference>
<dbReference type="PANTHER" id="PTHR17224:SF1">
    <property type="entry name" value="PEPTIDYL-TRNA HYDROLASE"/>
    <property type="match status" value="1"/>
</dbReference>
<dbReference type="Pfam" id="PF01195">
    <property type="entry name" value="Pept_tRNA_hydro"/>
    <property type="match status" value="1"/>
</dbReference>
<dbReference type="SUPFAM" id="SSF53178">
    <property type="entry name" value="Peptidyl-tRNA hydrolase-like"/>
    <property type="match status" value="1"/>
</dbReference>
<dbReference type="PROSITE" id="PS01195">
    <property type="entry name" value="PEPT_TRNA_HYDROL_1"/>
    <property type="match status" value="1"/>
</dbReference>
<dbReference type="PROSITE" id="PS01196">
    <property type="entry name" value="PEPT_TRNA_HYDROL_2"/>
    <property type="match status" value="1"/>
</dbReference>
<accession>A4Z0I5</accession>
<sequence length="201" mass="21937">MLLFVGLGNPGAKYSRNRHNIGFMAVDEISRRHRFSPWRRRFQGETSEGTLDSERVILLKPTTYMNESGRAVQEAASFFKLGVGDVTVFQDELELAPGKLRVKVGGGIAGHNGLRSISAHLGNDYRRVRLGIGHPGVKELVHGHVLSDFAKSEMPWVEALCEAVADNAELLTGKRDSTFANKVHLALQAKGFLDKGDAGAA</sequence>
<keyword id="KW-0963">Cytoplasm</keyword>
<keyword id="KW-0378">Hydrolase</keyword>
<keyword id="KW-1185">Reference proteome</keyword>
<keyword id="KW-0694">RNA-binding</keyword>
<keyword id="KW-0820">tRNA-binding</keyword>
<protein>
    <recommendedName>
        <fullName evidence="1">Peptidyl-tRNA hydrolase</fullName>
        <shortName evidence="1">Pth</shortName>
        <ecNumber evidence="1">3.1.1.29</ecNumber>
    </recommendedName>
</protein>
<evidence type="ECO:0000255" key="1">
    <source>
        <dbReference type="HAMAP-Rule" id="MF_00083"/>
    </source>
</evidence>
<organism>
    <name type="scientific">Bradyrhizobium sp. (strain ORS 278)</name>
    <dbReference type="NCBI Taxonomy" id="114615"/>
    <lineage>
        <taxon>Bacteria</taxon>
        <taxon>Pseudomonadati</taxon>
        <taxon>Pseudomonadota</taxon>
        <taxon>Alphaproteobacteria</taxon>
        <taxon>Hyphomicrobiales</taxon>
        <taxon>Nitrobacteraceae</taxon>
        <taxon>Bradyrhizobium</taxon>
    </lineage>
</organism>
<gene>
    <name evidence="1" type="primary">pth</name>
    <name type="ordered locus">BRADO6007</name>
</gene>
<name>PTH_BRASO</name>
<proteinExistence type="inferred from homology"/>
<reference key="1">
    <citation type="journal article" date="2007" name="Science">
        <title>Legumes symbioses: absence of nod genes in photosynthetic bradyrhizobia.</title>
        <authorList>
            <person name="Giraud E."/>
            <person name="Moulin L."/>
            <person name="Vallenet D."/>
            <person name="Barbe V."/>
            <person name="Cytryn E."/>
            <person name="Avarre J.-C."/>
            <person name="Jaubert M."/>
            <person name="Simon D."/>
            <person name="Cartieaux F."/>
            <person name="Prin Y."/>
            <person name="Bena G."/>
            <person name="Hannibal L."/>
            <person name="Fardoux J."/>
            <person name="Kojadinovic M."/>
            <person name="Vuillet L."/>
            <person name="Lajus A."/>
            <person name="Cruveiller S."/>
            <person name="Rouy Z."/>
            <person name="Mangenot S."/>
            <person name="Segurens B."/>
            <person name="Dossat C."/>
            <person name="Franck W.L."/>
            <person name="Chang W.-S."/>
            <person name="Saunders E."/>
            <person name="Bruce D."/>
            <person name="Richardson P."/>
            <person name="Normand P."/>
            <person name="Dreyfus B."/>
            <person name="Pignol D."/>
            <person name="Stacey G."/>
            <person name="Emerich D."/>
            <person name="Vermeglio A."/>
            <person name="Medigue C."/>
            <person name="Sadowsky M."/>
        </authorList>
    </citation>
    <scope>NUCLEOTIDE SEQUENCE [LARGE SCALE GENOMIC DNA]</scope>
    <source>
        <strain>ORS 278</strain>
    </source>
</reference>
<feature type="chain" id="PRO_1000010567" description="Peptidyl-tRNA hydrolase">
    <location>
        <begin position="1"/>
        <end position="201"/>
    </location>
</feature>
<feature type="active site" description="Proton acceptor" evidence="1">
    <location>
        <position position="19"/>
    </location>
</feature>
<feature type="binding site" evidence="1">
    <location>
        <position position="14"/>
    </location>
    <ligand>
        <name>tRNA</name>
        <dbReference type="ChEBI" id="CHEBI:17843"/>
    </ligand>
</feature>
<feature type="binding site" evidence="1">
    <location>
        <position position="64"/>
    </location>
    <ligand>
        <name>tRNA</name>
        <dbReference type="ChEBI" id="CHEBI:17843"/>
    </ligand>
</feature>
<feature type="binding site" evidence="1">
    <location>
        <position position="66"/>
    </location>
    <ligand>
        <name>tRNA</name>
        <dbReference type="ChEBI" id="CHEBI:17843"/>
    </ligand>
</feature>
<feature type="binding site" evidence="1">
    <location>
        <position position="112"/>
    </location>
    <ligand>
        <name>tRNA</name>
        <dbReference type="ChEBI" id="CHEBI:17843"/>
    </ligand>
</feature>
<feature type="site" description="Discriminates between blocked and unblocked aminoacyl-tRNA" evidence="1">
    <location>
        <position position="9"/>
    </location>
</feature>
<feature type="site" description="Stabilizes the basic form of H active site to accept a proton" evidence="1">
    <location>
        <position position="91"/>
    </location>
</feature>
<comment type="function">
    <text evidence="1">Hydrolyzes ribosome-free peptidyl-tRNAs (with 1 or more amino acids incorporated), which drop off the ribosome during protein synthesis, or as a result of ribosome stalling.</text>
</comment>
<comment type="function">
    <text evidence="1">Catalyzes the release of premature peptidyl moieties from peptidyl-tRNA molecules trapped in stalled 50S ribosomal subunits, and thus maintains levels of free tRNAs and 50S ribosomes.</text>
</comment>
<comment type="catalytic activity">
    <reaction evidence="1">
        <text>an N-acyl-L-alpha-aminoacyl-tRNA + H2O = an N-acyl-L-amino acid + a tRNA + H(+)</text>
        <dbReference type="Rhea" id="RHEA:54448"/>
        <dbReference type="Rhea" id="RHEA-COMP:10123"/>
        <dbReference type="Rhea" id="RHEA-COMP:13883"/>
        <dbReference type="ChEBI" id="CHEBI:15377"/>
        <dbReference type="ChEBI" id="CHEBI:15378"/>
        <dbReference type="ChEBI" id="CHEBI:59874"/>
        <dbReference type="ChEBI" id="CHEBI:78442"/>
        <dbReference type="ChEBI" id="CHEBI:138191"/>
        <dbReference type="EC" id="3.1.1.29"/>
    </reaction>
</comment>
<comment type="subunit">
    <text evidence="1">Monomer.</text>
</comment>
<comment type="subcellular location">
    <subcellularLocation>
        <location evidence="1">Cytoplasm</location>
    </subcellularLocation>
</comment>
<comment type="similarity">
    <text evidence="1">Belongs to the PTH family.</text>
</comment>